<dbReference type="EMBL" id="AF125108">
    <property type="protein sequence ID" value="AAL75945.1"/>
    <property type="molecule type" value="mRNA"/>
</dbReference>
<dbReference type="CCDS" id="CCDS10929.1"/>
<dbReference type="RefSeq" id="NP_570967.1">
    <property type="nucleotide sequence ID" value="NM_130897.3"/>
</dbReference>
<dbReference type="RefSeq" id="XP_006721358.1">
    <property type="nucleotide sequence ID" value="XM_006721295.4"/>
</dbReference>
<dbReference type="RefSeq" id="XP_054170066.1">
    <property type="nucleotide sequence ID" value="XM_054314091.1"/>
</dbReference>
<dbReference type="PDB" id="8J07">
    <property type="method" value="EM"/>
    <property type="resolution" value="4.10 A"/>
    <property type="chains" value="k5/m5/o5/q5=1-96"/>
</dbReference>
<dbReference type="PDBsum" id="8J07"/>
<dbReference type="EMDB" id="EMD-35888"/>
<dbReference type="SMR" id="Q8TF09"/>
<dbReference type="BioGRID" id="123714">
    <property type="interactions" value="14"/>
</dbReference>
<dbReference type="CORUM" id="Q8TF09"/>
<dbReference type="FunCoup" id="Q8TF09">
    <property type="interactions" value="92"/>
</dbReference>
<dbReference type="IntAct" id="Q8TF09">
    <property type="interactions" value="9"/>
</dbReference>
<dbReference type="MINT" id="Q8TF09"/>
<dbReference type="STRING" id="9606.ENSP00000455791"/>
<dbReference type="GlyGen" id="Q8TF09">
    <property type="glycosylation" value="1 site, 1 O-linked glycan (1 site)"/>
</dbReference>
<dbReference type="iPTMnet" id="Q8TF09"/>
<dbReference type="PhosphoSitePlus" id="Q8TF09"/>
<dbReference type="BioMuta" id="DYNLRB2"/>
<dbReference type="jPOST" id="Q8TF09"/>
<dbReference type="MassIVE" id="Q8TF09"/>
<dbReference type="PaxDb" id="9606-ENSP00000302936"/>
<dbReference type="PeptideAtlas" id="Q8TF09"/>
<dbReference type="ProteomicsDB" id="74535"/>
<dbReference type="Pumba" id="Q8TF09"/>
<dbReference type="TopDownProteomics" id="Q8TF09"/>
<dbReference type="Antibodypedia" id="55118">
    <property type="antibodies" value="94 antibodies from 21 providers"/>
</dbReference>
<dbReference type="DNASU" id="83657"/>
<dbReference type="Ensembl" id="ENST00000305904.11">
    <property type="protein sequence ID" value="ENSP00000302936.6"/>
    <property type="gene ID" value="ENSG00000168589.15"/>
</dbReference>
<dbReference type="GeneID" id="83657"/>
<dbReference type="KEGG" id="hsa:83657"/>
<dbReference type="MANE-Select" id="ENST00000305904.11">
    <property type="protein sequence ID" value="ENSP00000302936.6"/>
    <property type="RefSeq nucleotide sequence ID" value="NM_130897.3"/>
    <property type="RefSeq protein sequence ID" value="NP_570967.1"/>
</dbReference>
<dbReference type="UCSC" id="uc002ffo.3">
    <property type="organism name" value="human"/>
</dbReference>
<dbReference type="AGR" id="HGNC:15467"/>
<dbReference type="CTD" id="83657"/>
<dbReference type="DisGeNET" id="83657"/>
<dbReference type="GeneCards" id="DYNLRB2"/>
<dbReference type="HGNC" id="HGNC:15467">
    <property type="gene designation" value="DYNLRB2"/>
</dbReference>
<dbReference type="HPA" id="ENSG00000168589">
    <property type="expression patterns" value="Group enriched (choroid plexus, fallopian tube, testis)"/>
</dbReference>
<dbReference type="MIM" id="607168">
    <property type="type" value="gene"/>
</dbReference>
<dbReference type="neXtProt" id="NX_Q8TF09"/>
<dbReference type="OpenTargets" id="ENSG00000168589"/>
<dbReference type="PharmGKB" id="PA27437"/>
<dbReference type="VEuPathDB" id="HostDB:ENSG00000168589"/>
<dbReference type="eggNOG" id="KOG4115">
    <property type="taxonomic scope" value="Eukaryota"/>
</dbReference>
<dbReference type="GeneTree" id="ENSGT00390000011067"/>
<dbReference type="HOGENOM" id="CLU_113002_3_2_1"/>
<dbReference type="InParanoid" id="Q8TF09"/>
<dbReference type="OMA" id="NEIMCAP"/>
<dbReference type="OrthoDB" id="9985637at2759"/>
<dbReference type="PAN-GO" id="Q8TF09">
    <property type="GO annotations" value="5 GO annotations based on evolutionary models"/>
</dbReference>
<dbReference type="PhylomeDB" id="Q8TF09"/>
<dbReference type="TreeFam" id="TF315165"/>
<dbReference type="PathwayCommons" id="Q8TF09"/>
<dbReference type="Reactome" id="R-HSA-5620924">
    <property type="pathway name" value="Intraflagellar transport"/>
</dbReference>
<dbReference type="SignaLink" id="Q8TF09"/>
<dbReference type="BioGRID-ORCS" id="83657">
    <property type="hits" value="3 hits in 1145 CRISPR screens"/>
</dbReference>
<dbReference type="CD-CODE" id="8C2F96ED">
    <property type="entry name" value="Centrosome"/>
</dbReference>
<dbReference type="CD-CODE" id="FB4E32DD">
    <property type="entry name" value="Presynaptic clusters and postsynaptic densities"/>
</dbReference>
<dbReference type="ChiTaRS" id="DYNLRB2">
    <property type="organism name" value="human"/>
</dbReference>
<dbReference type="GenomeRNAi" id="83657"/>
<dbReference type="Pharos" id="Q8TF09">
    <property type="development level" value="Tbio"/>
</dbReference>
<dbReference type="PRO" id="PR:Q8TF09"/>
<dbReference type="Proteomes" id="UP000005640">
    <property type="component" value="Chromosome 16"/>
</dbReference>
<dbReference type="RNAct" id="Q8TF09">
    <property type="molecule type" value="protein"/>
</dbReference>
<dbReference type="Bgee" id="ENSG00000168589">
    <property type="expression patterns" value="Expressed in bronchial epithelial cell and 121 other cell types or tissues"/>
</dbReference>
<dbReference type="ExpressionAtlas" id="Q8TF09">
    <property type="expression patterns" value="baseline and differential"/>
</dbReference>
<dbReference type="GO" id="GO:0005813">
    <property type="term" value="C:centrosome"/>
    <property type="evidence" value="ECO:0000318"/>
    <property type="project" value="GO_Central"/>
</dbReference>
<dbReference type="GO" id="GO:0097542">
    <property type="term" value="C:ciliary tip"/>
    <property type="evidence" value="ECO:0000304"/>
    <property type="project" value="Reactome"/>
</dbReference>
<dbReference type="GO" id="GO:0005929">
    <property type="term" value="C:cilium"/>
    <property type="evidence" value="ECO:0000304"/>
    <property type="project" value="Reactome"/>
</dbReference>
<dbReference type="GO" id="GO:0005737">
    <property type="term" value="C:cytoplasm"/>
    <property type="evidence" value="ECO:0000318"/>
    <property type="project" value="GO_Central"/>
</dbReference>
<dbReference type="GO" id="GO:0005868">
    <property type="term" value="C:cytoplasmic dynein complex"/>
    <property type="evidence" value="ECO:0000250"/>
    <property type="project" value="UniProtKB"/>
</dbReference>
<dbReference type="GO" id="GO:0005874">
    <property type="term" value="C:microtubule"/>
    <property type="evidence" value="ECO:0007669"/>
    <property type="project" value="UniProtKB-KW"/>
</dbReference>
<dbReference type="GO" id="GO:0045505">
    <property type="term" value="F:dynein intermediate chain binding"/>
    <property type="evidence" value="ECO:0000318"/>
    <property type="project" value="GO_Central"/>
</dbReference>
<dbReference type="GO" id="GO:0003777">
    <property type="term" value="F:microtubule motor activity"/>
    <property type="evidence" value="ECO:0000303"/>
    <property type="project" value="UniProtKB"/>
</dbReference>
<dbReference type="GO" id="GO:0007018">
    <property type="term" value="P:microtubule-based movement"/>
    <property type="evidence" value="ECO:0000318"/>
    <property type="project" value="GO_Central"/>
</dbReference>
<dbReference type="FunFam" id="3.30.450.30:FF:000002">
    <property type="entry name" value="Dynein light chain roadblock"/>
    <property type="match status" value="1"/>
</dbReference>
<dbReference type="Gene3D" id="3.30.450.30">
    <property type="entry name" value="Dynein light chain 2a, cytoplasmic"/>
    <property type="match status" value="1"/>
</dbReference>
<dbReference type="InterPro" id="IPR016561">
    <property type="entry name" value="DYNLRB1/2"/>
</dbReference>
<dbReference type="InterPro" id="IPR004942">
    <property type="entry name" value="Roadblock/LAMTOR2_dom"/>
</dbReference>
<dbReference type="PANTHER" id="PTHR10779">
    <property type="entry name" value="DYNEIN LIGHT CHAIN ROADBLOCK"/>
    <property type="match status" value="1"/>
</dbReference>
<dbReference type="Pfam" id="PF03259">
    <property type="entry name" value="Robl_LC7"/>
    <property type="match status" value="1"/>
</dbReference>
<dbReference type="PIRSF" id="PIRSF009998">
    <property type="entry name" value="DLC7"/>
    <property type="match status" value="1"/>
</dbReference>
<dbReference type="SMART" id="SM00960">
    <property type="entry name" value="Robl_LC7"/>
    <property type="match status" value="1"/>
</dbReference>
<dbReference type="SUPFAM" id="SSF103196">
    <property type="entry name" value="Roadblock/LC7 domain"/>
    <property type="match status" value="1"/>
</dbReference>
<keyword id="KW-0002">3D-structure</keyword>
<keyword id="KW-0007">Acetylation</keyword>
<keyword id="KW-0963">Cytoplasm</keyword>
<keyword id="KW-0206">Cytoskeleton</keyword>
<keyword id="KW-0903">Direct protein sequencing</keyword>
<keyword id="KW-0243">Dynein</keyword>
<keyword id="KW-0493">Microtubule</keyword>
<keyword id="KW-0505">Motor protein</keyword>
<keyword id="KW-1267">Proteomics identification</keyword>
<keyword id="KW-1185">Reference proteome</keyword>
<keyword id="KW-0813">Transport</keyword>
<gene>
    <name type="primary">DYNLRB2</name>
    <name type="synonym">DNCL2B</name>
    <name type="synonym">DNLC2B</name>
    <name type="synonym">ROBLD2</name>
</gene>
<comment type="function">
    <text>Acts as one of several non-catalytic accessory components of the cytoplasmic dynein 1 complex that are thought to be involved in linking dynein to cargos and to adapter proteins that regulate dynein function. Cytoplasmic dynein 1 acts as a motor for the intracellular retrograde motility of vesicles and organelles along microtubules.</text>
</comment>
<comment type="subunit">
    <text evidence="1 3">Homodimer (Probable). The cytoplasmic dynein 1 complex consists of two catalytic heavy chains (HCs) and a number of non-catalytic subunits presented by intermediate chains (ICs), light intermediate chains (LICs) and light chains (LCs); the composition seems to vary in respect to the IC, LIC and LC composition. The heavy chain homodimer serves as a scaffold for the probable homodimeric assembly of the respective non-catalytic subunits. The ICs and LICs bind directly to the HC dimer and the LCs assemble on the IC dimer. Interacts with DYNC1I1 and DYNC1I2. Self-associates. Interacts with DYNLRB1.</text>
</comment>
<comment type="subcellular location">
    <subcellularLocation>
        <location>Cytoplasm</location>
        <location>Cytoskeleton</location>
    </subcellularLocation>
</comment>
<comment type="tissue specificity">
    <text>High expression in heart, brain, placenta, skeletal muscle, prostate and small intestine; moderate in kidney, pancreas, spleen, testis, ovary and colon; low in lung, liver, thymus and leukocyte.</text>
</comment>
<comment type="miscellaneous">
    <text>Expression is significantly down-regulated in hepatocellular carcinoma (HCC) patients.</text>
</comment>
<comment type="similarity">
    <text evidence="3">Belongs to the GAMAD family.</text>
</comment>
<organism>
    <name type="scientific">Homo sapiens</name>
    <name type="common">Human</name>
    <dbReference type="NCBI Taxonomy" id="9606"/>
    <lineage>
        <taxon>Eukaryota</taxon>
        <taxon>Metazoa</taxon>
        <taxon>Chordata</taxon>
        <taxon>Craniata</taxon>
        <taxon>Vertebrata</taxon>
        <taxon>Euteleostomi</taxon>
        <taxon>Mammalia</taxon>
        <taxon>Eutheria</taxon>
        <taxon>Euarchontoglires</taxon>
        <taxon>Primates</taxon>
        <taxon>Haplorrhini</taxon>
        <taxon>Catarrhini</taxon>
        <taxon>Hominidae</taxon>
        <taxon>Homo</taxon>
    </lineage>
</organism>
<sequence>MAEVEETLKRIQSHKGVIGTMVVNAEGIPIRTTLDNSTTVQYAGLLHHLTMKAKSTVRDIDPQNDLTFLRIRSKKHEIMVAPDKEYLLIVIQNPCE</sequence>
<evidence type="ECO:0000269" key="1">
    <source>
    </source>
</evidence>
<evidence type="ECO:0000269" key="2">
    <source ref="2"/>
</evidence>
<evidence type="ECO:0000305" key="3"/>
<protein>
    <recommendedName>
        <fullName>Dynein light chain roadblock-type 2</fullName>
    </recommendedName>
    <alternativeName>
        <fullName>Dynein light chain 2B, cytoplasmic</fullName>
    </alternativeName>
    <alternativeName>
        <fullName>Roadblock domain-containing protein 2</fullName>
    </alternativeName>
</protein>
<accession>Q8TF09</accession>
<reference key="1">
    <citation type="journal article" date="2001" name="Gene">
        <title>Identification of two novel human dynein light chain genes, DNLC2A and DNLC2B, and their expression changes in hepatocellular carcinoma tissues from 68 Chinese patients.</title>
        <authorList>
            <person name="Jiang J."/>
            <person name="Yu L."/>
            <person name="Huang X."/>
            <person name="Chen X."/>
            <person name="Li D."/>
            <person name="Zhang Y."/>
            <person name="Tang L."/>
            <person name="Zhao S."/>
        </authorList>
    </citation>
    <scope>NUCLEOTIDE SEQUENCE [MRNA]</scope>
    <source>
        <tissue>Liver</tissue>
        <tissue>Testis</tissue>
    </source>
</reference>
<reference key="2">
    <citation type="submission" date="2009-10" db="UniProtKB">
        <authorList>
            <person name="Bienvenut W.V."/>
            <person name="Lempens A."/>
            <person name="Norman J.C."/>
        </authorList>
    </citation>
    <scope>PROTEIN SEQUENCE OF 2-10 AND 55-70</scope>
    <scope>CLEAVAGE OF INITIATOR METHIONINE</scope>
    <scope>ACETYLATION AT ALA-2</scope>
    <scope>IDENTIFICATION BY MASS SPECTROMETRY</scope>
    <source>
        <tissue>Ovarian carcinoma</tissue>
    </source>
</reference>
<reference key="3">
    <citation type="journal article" date="2002" name="J. Biol. Chem.">
        <title>The roadblock light chain binds a novel region of the cytoplasmic Dynein intermediate chain.</title>
        <authorList>
            <person name="Susalka S.J."/>
            <person name="Nikulina K."/>
            <person name="Salata M.W."/>
            <person name="Vaughan P.S."/>
            <person name="King S.M."/>
            <person name="Vaughan K.T."/>
            <person name="Pfister K.K."/>
        </authorList>
    </citation>
    <scope>INTERACTION WITH DYNC1I1 AND DYNC1I2</scope>
</reference>
<proteinExistence type="evidence at protein level"/>
<name>DLRB2_HUMAN</name>
<feature type="initiator methionine" description="Removed" evidence="2">
    <location>
        <position position="1"/>
    </location>
</feature>
<feature type="chain" id="PRO_0000220958" description="Dynein light chain roadblock-type 2">
    <location>
        <begin position="2"/>
        <end position="96"/>
    </location>
</feature>
<feature type="modified residue" description="N-acetylalanine" evidence="2">
    <location>
        <position position="2"/>
    </location>
</feature>
<feature type="sequence variant" id="VAR_049126" description="In dbSNP:rs13332289.">
    <original>H</original>
    <variation>R</variation>
    <location>
        <position position="14"/>
    </location>
</feature>